<reference key="1">
    <citation type="journal article" date="2007" name="Science">
        <title>Draft genome of the filarial nematode parasite Brugia malayi.</title>
        <authorList>
            <person name="Ghedin E."/>
            <person name="Wang S."/>
            <person name="Spiro D."/>
            <person name="Caler E."/>
            <person name="Zhao Q."/>
            <person name="Crabtree J."/>
            <person name="Allen J.E."/>
            <person name="Delcher A.L."/>
            <person name="Guiliano D.B."/>
            <person name="Miranda-Saavedra D."/>
            <person name="Angiuoli S.V."/>
            <person name="Creasy T."/>
            <person name="Amedeo P."/>
            <person name="Haas B."/>
            <person name="El-Sayed N.M."/>
            <person name="Wortman J.R."/>
            <person name="Feldblyum T."/>
            <person name="Tallon L."/>
            <person name="Schatz M."/>
            <person name="Shumway M."/>
            <person name="Koo H."/>
            <person name="Salzberg S.L."/>
            <person name="Schobel S."/>
            <person name="Pertea M."/>
            <person name="Pop M."/>
            <person name="White O."/>
            <person name="Barton G.J."/>
            <person name="Carlow C.K.S."/>
            <person name="Crawford M.J."/>
            <person name="Daub J."/>
            <person name="Dimmic M.W."/>
            <person name="Estes C.F."/>
            <person name="Foster J.M."/>
            <person name="Ganatra M."/>
            <person name="Gregory W.F."/>
            <person name="Johnson N.M."/>
            <person name="Jin J."/>
            <person name="Komuniecki R."/>
            <person name="Korf I."/>
            <person name="Kumar S."/>
            <person name="Laney S."/>
            <person name="Li B.-W."/>
            <person name="Li W."/>
            <person name="Lindblom T.H."/>
            <person name="Lustigman S."/>
            <person name="Ma D."/>
            <person name="Maina C.V."/>
            <person name="Martin D.M."/>
            <person name="McCarter J.P."/>
            <person name="McReynolds L."/>
            <person name="Mitreva M."/>
            <person name="Nutman T.B."/>
            <person name="Parkinson J."/>
            <person name="Peregrin-Alvarez J.M."/>
            <person name="Poole C."/>
            <person name="Ren Q."/>
            <person name="Saunders L."/>
            <person name="Sluder A.E."/>
            <person name="Smith K."/>
            <person name="Stanke M."/>
            <person name="Unnasch T.R."/>
            <person name="Ware J."/>
            <person name="Wei A.D."/>
            <person name="Weil G."/>
            <person name="Williams D.J."/>
            <person name="Zhang Y."/>
            <person name="Williams S.A."/>
            <person name="Fraser-Liggett C."/>
            <person name="Slatko B."/>
            <person name="Blaxter M.L."/>
            <person name="Scott A.L."/>
        </authorList>
    </citation>
    <scope>NUCLEOTIDE SEQUENCE [LARGE SCALE GENOMIC DNA]</scope>
</reference>
<accession>A8P7J8</accession>
<feature type="chain" id="PRO_0000379002" description="FHIP family protein Bm1_18400">
    <location>
        <begin position="1"/>
        <end position="1016"/>
    </location>
</feature>
<feature type="region of interest" description="Disordered" evidence="1">
    <location>
        <begin position="586"/>
        <end position="608"/>
    </location>
</feature>
<feature type="region of interest" description="Disordered" evidence="1">
    <location>
        <begin position="757"/>
        <end position="778"/>
    </location>
</feature>
<keyword id="KW-1185">Reference proteome</keyword>
<comment type="similarity">
    <text evidence="2">Belongs to the FHIP family.</text>
</comment>
<evidence type="ECO:0000256" key="1">
    <source>
        <dbReference type="SAM" id="MobiDB-lite"/>
    </source>
</evidence>
<evidence type="ECO:0000305" key="2"/>
<sequence>MRRWFSKLGSTSLASTSRVTAFSSSESAAVEQLADSSIPPPITPFIIAKPDIHWNVDFASDPCSWESCFDAHWEAAEKLLENEEEISYEKVITVFQHLNCTVQLLMMEANAQPESAIGSILDRHFTHQIMERVVDWAIAAPHFLTPTCQVNMIGLYEVIVGESHTQNHCLLVHKPMLLPLLKLLDWCRKSAEKRNFTPSNTDRHFVLLLNQICTKLAEDTTLLHFFFDFDDDCDEQFLVFSLLIPYLYDSGEVGQLARDALLLILSVSRRLKRVATFIAVKSNFCPVVATGLSGCFSQLSRSFGSMLYVSDSWHKINADDIDSYSSLLDFHSSLIFCNAVIQVAHGYVVSQVIRYVYHGFLLPVVLPSLLQGGQDELISSTAYYHLCLDSVTETVLVQTIVKLLLNESCESNKTVLDVIVERISAGNRLSQVSLSLVRTLIDLRCEDIMFDLVFKYLLPCTFLQPNQTLHLKNQMYVRTAAQTLLTFVPECTYKSSALCSQETLHIYLSECRNYVQETTDACCEKWVWSYDGRSPFFMPKINSDEESATNSNGAFVRHSSVRSSMASARNGLNRYFVSRNAHITADSLRQHTPPPELGEQESSSRSSFPYDIADSSLVLDDEGDELIIPALTPTSLMMMTSSSDYFQFAYGELSETDTEAINPSVVSMSGAPAQSISDKASLASTSANCDTDIEMARSFVLRGWGQIEDTDTFMALMDRVPASKIKHSLEENMALIDSRIQYLEELKAEAKLQDLESDGFKSDTNNDNDDEDPAPLGKPIECFGNQGVGPFLESIMRSLENMLDNSLYVTLQTTSVLAALASYPQPLIAHYLFDQRMLLQPNVKNLFKVMDSLKTQIDAYASSLDGFDVLLERGIKFLRSRAERYEKVVESSRRLRSSESFSRNGNMEGRSSSRGLFNRFRSSNNKRLYPSNDSSHPHEFRIYTHKAIESRDVTLDHARAKQFVFAAIILSQFCQELAATVLQHSTVVPRPKVSPAKDYLRREVNSAGKDANCCAD</sequence>
<proteinExistence type="inferred from homology"/>
<gene>
    <name type="ORF">Bm1_18400</name>
</gene>
<dbReference type="EMBL" id="DS238807">
    <property type="protein sequence ID" value="EDP36017.1"/>
    <property type="molecule type" value="Genomic_DNA"/>
</dbReference>
<dbReference type="RefSeq" id="XP_001895137.1">
    <property type="nucleotide sequence ID" value="XM_001895102.1"/>
</dbReference>
<dbReference type="SMR" id="A8P7J8"/>
<dbReference type="FunCoup" id="A8P7J8">
    <property type="interactions" value="460"/>
</dbReference>
<dbReference type="WormBase" id="Bm11307">
    <property type="protein sequence ID" value="BM42660"/>
    <property type="gene ID" value="WBGene00231568"/>
</dbReference>
<dbReference type="InParanoid" id="A8P7J8"/>
<dbReference type="Proteomes" id="UP000006672">
    <property type="component" value="Unassembled WGS sequence"/>
</dbReference>
<dbReference type="InterPro" id="IPR019384">
    <property type="entry name" value="FHIP"/>
</dbReference>
<dbReference type="InterPro" id="IPR045669">
    <property type="entry name" value="FHIP_C"/>
</dbReference>
<dbReference type="InterPro" id="IPR045668">
    <property type="entry name" value="FHIP_KELAA_motif"/>
</dbReference>
<dbReference type="PANTHER" id="PTHR21705:SF11">
    <property type="entry name" value="FHIP FAMILY PROTEIN CG3558"/>
    <property type="match status" value="1"/>
</dbReference>
<dbReference type="PANTHER" id="PTHR21705">
    <property type="entry name" value="RAI16 PROTEIN-RELATED"/>
    <property type="match status" value="1"/>
</dbReference>
<dbReference type="Pfam" id="PF19314">
    <property type="entry name" value="DUF5917"/>
    <property type="match status" value="1"/>
</dbReference>
<dbReference type="Pfam" id="PF19311">
    <property type="entry name" value="KELAA"/>
    <property type="match status" value="1"/>
</dbReference>
<dbReference type="Pfam" id="PF10257">
    <property type="entry name" value="RAI16-like"/>
    <property type="match status" value="1"/>
</dbReference>
<organism>
    <name type="scientific">Brugia malayi</name>
    <name type="common">Filarial nematode worm</name>
    <dbReference type="NCBI Taxonomy" id="6279"/>
    <lineage>
        <taxon>Eukaryota</taxon>
        <taxon>Metazoa</taxon>
        <taxon>Ecdysozoa</taxon>
        <taxon>Nematoda</taxon>
        <taxon>Chromadorea</taxon>
        <taxon>Rhabditida</taxon>
        <taxon>Spirurina</taxon>
        <taxon>Spiruromorpha</taxon>
        <taxon>Filarioidea</taxon>
        <taxon>Onchocercidae</taxon>
        <taxon>Brugia</taxon>
    </lineage>
</organism>
<protein>
    <recommendedName>
        <fullName>FHIP family protein Bm1_18400</fullName>
    </recommendedName>
</protein>
<name>U518_BRUMA</name>